<name>URE2_POLNA</name>
<sequence>MIPGELITDGPDHLLNEGRRTVTLVVQNTADRPIQVGSHYHFAETNAALGFDRDAARGMRLNIASGTAVRFEPGQQRTVELVDFAGERKIYGFRGLIQGAL</sequence>
<evidence type="ECO:0000255" key="1">
    <source>
        <dbReference type="HAMAP-Rule" id="MF_01954"/>
    </source>
</evidence>
<protein>
    <recommendedName>
        <fullName evidence="1">Urease subunit beta</fullName>
        <ecNumber evidence="1">3.5.1.5</ecNumber>
    </recommendedName>
    <alternativeName>
        <fullName evidence="1">Urea amidohydrolase subunit beta</fullName>
    </alternativeName>
</protein>
<reference key="1">
    <citation type="journal article" date="2009" name="Environ. Microbiol.">
        <title>The genome of Polaromonas naphthalenivorans strain CJ2, isolated from coal tar-contaminated sediment, reveals physiological and metabolic versatility and evolution through extensive horizontal gene transfer.</title>
        <authorList>
            <person name="Yagi J.M."/>
            <person name="Sims D."/>
            <person name="Brettin T."/>
            <person name="Bruce D."/>
            <person name="Madsen E.L."/>
        </authorList>
    </citation>
    <scope>NUCLEOTIDE SEQUENCE [LARGE SCALE GENOMIC DNA]</scope>
    <source>
        <strain>CJ2</strain>
    </source>
</reference>
<organism>
    <name type="scientific">Polaromonas naphthalenivorans (strain CJ2)</name>
    <dbReference type="NCBI Taxonomy" id="365044"/>
    <lineage>
        <taxon>Bacteria</taxon>
        <taxon>Pseudomonadati</taxon>
        <taxon>Pseudomonadota</taxon>
        <taxon>Betaproteobacteria</taxon>
        <taxon>Burkholderiales</taxon>
        <taxon>Comamonadaceae</taxon>
        <taxon>Polaromonas</taxon>
    </lineage>
</organism>
<accession>A1VKW4</accession>
<proteinExistence type="inferred from homology"/>
<gene>
    <name evidence="1" type="primary">ureB</name>
    <name type="ordered locus">Pnap_0975</name>
</gene>
<feature type="chain" id="PRO_1000070751" description="Urease subunit beta">
    <location>
        <begin position="1"/>
        <end position="101"/>
    </location>
</feature>
<dbReference type="EC" id="3.5.1.5" evidence="1"/>
<dbReference type="EMBL" id="CP000529">
    <property type="protein sequence ID" value="ABM36292.1"/>
    <property type="molecule type" value="Genomic_DNA"/>
</dbReference>
<dbReference type="RefSeq" id="WP_011800386.1">
    <property type="nucleotide sequence ID" value="NC_008781.1"/>
</dbReference>
<dbReference type="SMR" id="A1VKW4"/>
<dbReference type="STRING" id="365044.Pnap_0975"/>
<dbReference type="KEGG" id="pna:Pnap_0975"/>
<dbReference type="eggNOG" id="COG0832">
    <property type="taxonomic scope" value="Bacteria"/>
</dbReference>
<dbReference type="HOGENOM" id="CLU_129707_1_1_4"/>
<dbReference type="OrthoDB" id="9797217at2"/>
<dbReference type="UniPathway" id="UPA00258">
    <property type="reaction ID" value="UER00370"/>
</dbReference>
<dbReference type="Proteomes" id="UP000000644">
    <property type="component" value="Chromosome"/>
</dbReference>
<dbReference type="GO" id="GO:0035550">
    <property type="term" value="C:urease complex"/>
    <property type="evidence" value="ECO:0007669"/>
    <property type="project" value="InterPro"/>
</dbReference>
<dbReference type="GO" id="GO:0009039">
    <property type="term" value="F:urease activity"/>
    <property type="evidence" value="ECO:0007669"/>
    <property type="project" value="UniProtKB-UniRule"/>
</dbReference>
<dbReference type="GO" id="GO:0043419">
    <property type="term" value="P:urea catabolic process"/>
    <property type="evidence" value="ECO:0007669"/>
    <property type="project" value="UniProtKB-UniRule"/>
</dbReference>
<dbReference type="CDD" id="cd00407">
    <property type="entry name" value="Urease_beta"/>
    <property type="match status" value="1"/>
</dbReference>
<dbReference type="FunFam" id="2.10.150.10:FF:000001">
    <property type="entry name" value="Urease subunit beta"/>
    <property type="match status" value="1"/>
</dbReference>
<dbReference type="Gene3D" id="2.10.150.10">
    <property type="entry name" value="Urease, beta subunit"/>
    <property type="match status" value="1"/>
</dbReference>
<dbReference type="HAMAP" id="MF_01954">
    <property type="entry name" value="Urease_beta"/>
    <property type="match status" value="1"/>
</dbReference>
<dbReference type="InterPro" id="IPR002019">
    <property type="entry name" value="Urease_beta-like"/>
</dbReference>
<dbReference type="InterPro" id="IPR036461">
    <property type="entry name" value="Urease_betasu_sf"/>
</dbReference>
<dbReference type="InterPro" id="IPR050069">
    <property type="entry name" value="Urease_subunit"/>
</dbReference>
<dbReference type="NCBIfam" id="NF009682">
    <property type="entry name" value="PRK13203.1"/>
    <property type="match status" value="1"/>
</dbReference>
<dbReference type="NCBIfam" id="TIGR00192">
    <property type="entry name" value="urease_beta"/>
    <property type="match status" value="1"/>
</dbReference>
<dbReference type="PANTHER" id="PTHR33569">
    <property type="entry name" value="UREASE"/>
    <property type="match status" value="1"/>
</dbReference>
<dbReference type="PANTHER" id="PTHR33569:SF1">
    <property type="entry name" value="UREASE"/>
    <property type="match status" value="1"/>
</dbReference>
<dbReference type="Pfam" id="PF00699">
    <property type="entry name" value="Urease_beta"/>
    <property type="match status" value="1"/>
</dbReference>
<dbReference type="SUPFAM" id="SSF51278">
    <property type="entry name" value="Urease, beta-subunit"/>
    <property type="match status" value="1"/>
</dbReference>
<keyword id="KW-0963">Cytoplasm</keyword>
<keyword id="KW-0378">Hydrolase</keyword>
<keyword id="KW-1185">Reference proteome</keyword>
<comment type="catalytic activity">
    <reaction evidence="1">
        <text>urea + 2 H2O + H(+) = hydrogencarbonate + 2 NH4(+)</text>
        <dbReference type="Rhea" id="RHEA:20557"/>
        <dbReference type="ChEBI" id="CHEBI:15377"/>
        <dbReference type="ChEBI" id="CHEBI:15378"/>
        <dbReference type="ChEBI" id="CHEBI:16199"/>
        <dbReference type="ChEBI" id="CHEBI:17544"/>
        <dbReference type="ChEBI" id="CHEBI:28938"/>
        <dbReference type="EC" id="3.5.1.5"/>
    </reaction>
</comment>
<comment type="pathway">
    <text evidence="1">Nitrogen metabolism; urea degradation; CO(2) and NH(3) from urea (urease route): step 1/1.</text>
</comment>
<comment type="subunit">
    <text evidence="1">Heterotrimer of UreA (gamma), UreB (beta) and UreC (alpha) subunits. Three heterotrimers associate to form the active enzyme.</text>
</comment>
<comment type="subcellular location">
    <subcellularLocation>
        <location evidence="1">Cytoplasm</location>
    </subcellularLocation>
</comment>
<comment type="similarity">
    <text evidence="1">Belongs to the urease beta subunit family.</text>
</comment>